<sequence length="300" mass="31845">MTDTPDPAAVSSPAIKAAVLSEALPYIRRFHGKTIVVKYGGNAMTEERLQRSFAHDVVLLKLVGLNPVVVHGGGPQIDDALRRIGKQGTFVQGMRVTDAETMEVVEWVLGGQVQQDIVMMINEVGGKAVGLTGKDGMLIQARKKLMANKENPQEPIDIGFVGDITQVEPAVVKALQDDQFIPVISPIGYGEDGTAYNINADVVAGKMAEVLGAEKLLMMTNTPGVLDKSGKLLRSLSAQTIDELFADGTISGGMLPKIASSLDAAKNGVNSVHIVDGRVPHCLLLEILTDQGVGTMISSH</sequence>
<accession>A9I0K4</accession>
<gene>
    <name evidence="1" type="primary">argB</name>
    <name type="ordered locus">Bpet0434</name>
</gene>
<name>ARGB_BORPD</name>
<proteinExistence type="inferred from homology"/>
<organism>
    <name type="scientific">Bordetella petrii (strain ATCC BAA-461 / DSM 12804 / CCUG 43448)</name>
    <dbReference type="NCBI Taxonomy" id="340100"/>
    <lineage>
        <taxon>Bacteria</taxon>
        <taxon>Pseudomonadati</taxon>
        <taxon>Pseudomonadota</taxon>
        <taxon>Betaproteobacteria</taxon>
        <taxon>Burkholderiales</taxon>
        <taxon>Alcaligenaceae</taxon>
        <taxon>Bordetella</taxon>
    </lineage>
</organism>
<evidence type="ECO:0000255" key="1">
    <source>
        <dbReference type="HAMAP-Rule" id="MF_00082"/>
    </source>
</evidence>
<dbReference type="EC" id="2.7.2.8" evidence="1"/>
<dbReference type="EMBL" id="AM902716">
    <property type="protein sequence ID" value="CAP40766.1"/>
    <property type="molecule type" value="Genomic_DNA"/>
</dbReference>
<dbReference type="SMR" id="A9I0K4"/>
<dbReference type="STRING" id="94624.Bpet0434"/>
<dbReference type="KEGG" id="bpt:Bpet0434"/>
<dbReference type="eggNOG" id="COG0548">
    <property type="taxonomic scope" value="Bacteria"/>
</dbReference>
<dbReference type="UniPathway" id="UPA00068">
    <property type="reaction ID" value="UER00107"/>
</dbReference>
<dbReference type="Proteomes" id="UP000001225">
    <property type="component" value="Chromosome"/>
</dbReference>
<dbReference type="GO" id="GO:0005737">
    <property type="term" value="C:cytoplasm"/>
    <property type="evidence" value="ECO:0007669"/>
    <property type="project" value="UniProtKB-SubCell"/>
</dbReference>
<dbReference type="GO" id="GO:0003991">
    <property type="term" value="F:acetylglutamate kinase activity"/>
    <property type="evidence" value="ECO:0007669"/>
    <property type="project" value="UniProtKB-UniRule"/>
</dbReference>
<dbReference type="GO" id="GO:0005524">
    <property type="term" value="F:ATP binding"/>
    <property type="evidence" value="ECO:0007669"/>
    <property type="project" value="UniProtKB-UniRule"/>
</dbReference>
<dbReference type="GO" id="GO:0042450">
    <property type="term" value="P:arginine biosynthetic process via ornithine"/>
    <property type="evidence" value="ECO:0007669"/>
    <property type="project" value="UniProtKB-UniRule"/>
</dbReference>
<dbReference type="GO" id="GO:0006526">
    <property type="term" value="P:L-arginine biosynthetic process"/>
    <property type="evidence" value="ECO:0007669"/>
    <property type="project" value="UniProtKB-UniPathway"/>
</dbReference>
<dbReference type="CDD" id="cd04250">
    <property type="entry name" value="AAK_NAGK-C"/>
    <property type="match status" value="1"/>
</dbReference>
<dbReference type="FunFam" id="3.40.1160.10:FF:000004">
    <property type="entry name" value="Acetylglutamate kinase"/>
    <property type="match status" value="1"/>
</dbReference>
<dbReference type="Gene3D" id="3.40.1160.10">
    <property type="entry name" value="Acetylglutamate kinase-like"/>
    <property type="match status" value="1"/>
</dbReference>
<dbReference type="HAMAP" id="MF_00082">
    <property type="entry name" value="ArgB"/>
    <property type="match status" value="1"/>
</dbReference>
<dbReference type="InterPro" id="IPR036393">
    <property type="entry name" value="AceGlu_kinase-like_sf"/>
</dbReference>
<dbReference type="InterPro" id="IPR004662">
    <property type="entry name" value="AcgluKinase_fam"/>
</dbReference>
<dbReference type="InterPro" id="IPR037528">
    <property type="entry name" value="ArgB"/>
</dbReference>
<dbReference type="InterPro" id="IPR001048">
    <property type="entry name" value="Asp/Glu/Uridylate_kinase"/>
</dbReference>
<dbReference type="InterPro" id="IPR001057">
    <property type="entry name" value="Glu/AcGlu_kinase"/>
</dbReference>
<dbReference type="InterPro" id="IPR041727">
    <property type="entry name" value="NAGK-C"/>
</dbReference>
<dbReference type="NCBIfam" id="TIGR00761">
    <property type="entry name" value="argB"/>
    <property type="match status" value="1"/>
</dbReference>
<dbReference type="PANTHER" id="PTHR23342">
    <property type="entry name" value="N-ACETYLGLUTAMATE SYNTHASE"/>
    <property type="match status" value="1"/>
</dbReference>
<dbReference type="PANTHER" id="PTHR23342:SF0">
    <property type="entry name" value="N-ACETYLGLUTAMATE SYNTHASE, MITOCHONDRIAL"/>
    <property type="match status" value="1"/>
</dbReference>
<dbReference type="Pfam" id="PF00696">
    <property type="entry name" value="AA_kinase"/>
    <property type="match status" value="1"/>
</dbReference>
<dbReference type="PIRSF" id="PIRSF000728">
    <property type="entry name" value="NAGK"/>
    <property type="match status" value="1"/>
</dbReference>
<dbReference type="PRINTS" id="PR00474">
    <property type="entry name" value="GLU5KINASE"/>
</dbReference>
<dbReference type="SUPFAM" id="SSF53633">
    <property type="entry name" value="Carbamate kinase-like"/>
    <property type="match status" value="1"/>
</dbReference>
<comment type="function">
    <text evidence="1">Catalyzes the ATP-dependent phosphorylation of N-acetyl-L-glutamate.</text>
</comment>
<comment type="catalytic activity">
    <reaction evidence="1">
        <text>N-acetyl-L-glutamate + ATP = N-acetyl-L-glutamyl 5-phosphate + ADP</text>
        <dbReference type="Rhea" id="RHEA:14629"/>
        <dbReference type="ChEBI" id="CHEBI:30616"/>
        <dbReference type="ChEBI" id="CHEBI:44337"/>
        <dbReference type="ChEBI" id="CHEBI:57936"/>
        <dbReference type="ChEBI" id="CHEBI:456216"/>
        <dbReference type="EC" id="2.7.2.8"/>
    </reaction>
</comment>
<comment type="pathway">
    <text evidence="1">Amino-acid biosynthesis; L-arginine biosynthesis; N(2)-acetyl-L-ornithine from L-glutamate: step 2/4.</text>
</comment>
<comment type="subcellular location">
    <subcellularLocation>
        <location evidence="1">Cytoplasm</location>
    </subcellularLocation>
</comment>
<comment type="similarity">
    <text evidence="1">Belongs to the acetylglutamate kinase family. ArgB subfamily.</text>
</comment>
<keyword id="KW-0028">Amino-acid biosynthesis</keyword>
<keyword id="KW-0055">Arginine biosynthesis</keyword>
<keyword id="KW-0067">ATP-binding</keyword>
<keyword id="KW-0963">Cytoplasm</keyword>
<keyword id="KW-0418">Kinase</keyword>
<keyword id="KW-0547">Nucleotide-binding</keyword>
<keyword id="KW-0808">Transferase</keyword>
<protein>
    <recommendedName>
        <fullName evidence="1">Acetylglutamate kinase</fullName>
        <ecNumber evidence="1">2.7.2.8</ecNumber>
    </recommendedName>
    <alternativeName>
        <fullName evidence="1">N-acetyl-L-glutamate 5-phosphotransferase</fullName>
    </alternativeName>
    <alternativeName>
        <fullName evidence="1">NAG kinase</fullName>
        <shortName evidence="1">NAGK</shortName>
    </alternativeName>
</protein>
<feature type="chain" id="PRO_0000335611" description="Acetylglutamate kinase">
    <location>
        <begin position="1"/>
        <end position="300"/>
    </location>
</feature>
<feature type="binding site" evidence="1">
    <location>
        <begin position="73"/>
        <end position="74"/>
    </location>
    <ligand>
        <name>substrate</name>
    </ligand>
</feature>
<feature type="binding site" evidence="1">
    <location>
        <position position="95"/>
    </location>
    <ligand>
        <name>substrate</name>
    </ligand>
</feature>
<feature type="binding site" evidence="1">
    <location>
        <position position="197"/>
    </location>
    <ligand>
        <name>substrate</name>
    </ligand>
</feature>
<feature type="site" description="Transition state stabilizer" evidence="1">
    <location>
        <position position="38"/>
    </location>
</feature>
<feature type="site" description="Transition state stabilizer" evidence="1">
    <location>
        <position position="257"/>
    </location>
</feature>
<reference key="1">
    <citation type="journal article" date="2008" name="BMC Genomics">
        <title>The missing link: Bordetella petrii is endowed with both the metabolic versatility of environmental bacteria and virulence traits of pathogenic Bordetellae.</title>
        <authorList>
            <person name="Gross R."/>
            <person name="Guzman C.A."/>
            <person name="Sebaihia M."/>
            <person name="Martin dos Santos V.A.P."/>
            <person name="Pieper D.H."/>
            <person name="Koebnik R."/>
            <person name="Lechner M."/>
            <person name="Bartels D."/>
            <person name="Buhrmester J."/>
            <person name="Choudhuri J.V."/>
            <person name="Ebensen T."/>
            <person name="Gaigalat L."/>
            <person name="Herrmann S."/>
            <person name="Khachane A.N."/>
            <person name="Larisch C."/>
            <person name="Link S."/>
            <person name="Linke B."/>
            <person name="Meyer F."/>
            <person name="Mormann S."/>
            <person name="Nakunst D."/>
            <person name="Rueckert C."/>
            <person name="Schneiker-Bekel S."/>
            <person name="Schulze K."/>
            <person name="Voerholter F.-J."/>
            <person name="Yevsa T."/>
            <person name="Engle J.T."/>
            <person name="Goldman W.E."/>
            <person name="Puehler A."/>
            <person name="Goebel U.B."/>
            <person name="Goesmann A."/>
            <person name="Bloecker H."/>
            <person name="Kaiser O."/>
            <person name="Martinez-Arias R."/>
        </authorList>
    </citation>
    <scope>NUCLEOTIDE SEQUENCE [LARGE SCALE GENOMIC DNA]</scope>
    <source>
        <strain>ATCC BAA-461 / DSM 12804 / CCUG 43448</strain>
    </source>
</reference>